<keyword id="KW-0002">3D-structure</keyword>
<feature type="chain" id="PRO_0000201803" description="UPF0352 protein VP2129">
    <location>
        <begin position="1"/>
        <end position="75"/>
    </location>
</feature>
<feature type="helix" evidence="2">
    <location>
        <begin position="9"/>
        <end position="25"/>
    </location>
</feature>
<feature type="helix" evidence="2">
    <location>
        <begin position="30"/>
        <end position="47"/>
    </location>
</feature>
<feature type="helix" evidence="2">
    <location>
        <begin position="51"/>
        <end position="68"/>
    </location>
</feature>
<proteinExistence type="evidence at protein level"/>
<accession>Q87MV2</accession>
<organism>
    <name type="scientific">Vibrio parahaemolyticus serotype O3:K6 (strain RIMD 2210633)</name>
    <dbReference type="NCBI Taxonomy" id="223926"/>
    <lineage>
        <taxon>Bacteria</taxon>
        <taxon>Pseudomonadati</taxon>
        <taxon>Pseudomonadota</taxon>
        <taxon>Gammaproteobacteria</taxon>
        <taxon>Vibrionales</taxon>
        <taxon>Vibrionaceae</taxon>
        <taxon>Vibrio</taxon>
    </lineage>
</organism>
<dbReference type="EMBL" id="BA000031">
    <property type="protein sequence ID" value="BAC60392.1"/>
    <property type="molecule type" value="Genomic_DNA"/>
</dbReference>
<dbReference type="RefSeq" id="NP_798508.1">
    <property type="nucleotide sequence ID" value="NC_004603.1"/>
</dbReference>
<dbReference type="RefSeq" id="WP_005461743.1">
    <property type="nucleotide sequence ID" value="NC_004603.1"/>
</dbReference>
<dbReference type="PDB" id="2JPQ">
    <property type="method" value="NMR"/>
    <property type="chains" value="A/B=1-75"/>
</dbReference>
<dbReference type="PDBsum" id="2JPQ"/>
<dbReference type="SMR" id="Q87MV2"/>
<dbReference type="GeneID" id="1189641"/>
<dbReference type="KEGG" id="vpa:VP2129"/>
<dbReference type="PATRIC" id="fig|223926.6.peg.2037"/>
<dbReference type="eggNOG" id="COG3082">
    <property type="taxonomic scope" value="Bacteria"/>
</dbReference>
<dbReference type="HOGENOM" id="CLU_175457_0_0_6"/>
<dbReference type="EvolutionaryTrace" id="Q87MV2"/>
<dbReference type="Proteomes" id="UP000002493">
    <property type="component" value="Chromosome 1"/>
</dbReference>
<dbReference type="Gene3D" id="1.10.3390.10">
    <property type="entry name" value="YejL-like"/>
    <property type="match status" value="1"/>
</dbReference>
<dbReference type="HAMAP" id="MF_00816">
    <property type="entry name" value="UPF0352"/>
    <property type="match status" value="1"/>
</dbReference>
<dbReference type="InterPro" id="IPR009857">
    <property type="entry name" value="UPF0352"/>
</dbReference>
<dbReference type="InterPro" id="IPR023202">
    <property type="entry name" value="YejL_sf"/>
</dbReference>
<dbReference type="NCBIfam" id="NF010242">
    <property type="entry name" value="PRK13689.1"/>
    <property type="match status" value="1"/>
</dbReference>
<dbReference type="Pfam" id="PF07208">
    <property type="entry name" value="DUF1414"/>
    <property type="match status" value="1"/>
</dbReference>
<dbReference type="PIRSF" id="PIRSF006188">
    <property type="entry name" value="UCP006188"/>
    <property type="match status" value="1"/>
</dbReference>
<dbReference type="SUPFAM" id="SSF158651">
    <property type="entry name" value="YejL-like"/>
    <property type="match status" value="1"/>
</dbReference>
<protein>
    <recommendedName>
        <fullName evidence="1">UPF0352 protein VP2129</fullName>
    </recommendedName>
</protein>
<sequence length="75" mass="8204">MPITSKYTDEQVEKILAEVALVLEKHAASPELTLMIAGNIATNVLNQRVAASQRKLIAEKFAQALMSSLETPKTH</sequence>
<reference key="1">
    <citation type="journal article" date="2003" name="Lancet">
        <title>Genome sequence of Vibrio parahaemolyticus: a pathogenic mechanism distinct from that of V. cholerae.</title>
        <authorList>
            <person name="Makino K."/>
            <person name="Oshima K."/>
            <person name="Kurokawa K."/>
            <person name="Yokoyama K."/>
            <person name="Uda T."/>
            <person name="Tagomori K."/>
            <person name="Iijima Y."/>
            <person name="Najima M."/>
            <person name="Nakano M."/>
            <person name="Yamashita A."/>
            <person name="Kubota Y."/>
            <person name="Kimura S."/>
            <person name="Yasunaga T."/>
            <person name="Honda T."/>
            <person name="Shinagawa H."/>
            <person name="Hattori M."/>
            <person name="Iida T."/>
        </authorList>
    </citation>
    <scope>NUCLEOTIDE SEQUENCE [LARGE SCALE GENOMIC DNA]</scope>
    <source>
        <strain>RIMD 2210633</strain>
    </source>
</reference>
<comment type="similarity">
    <text evidence="1">Belongs to the UPF0352 family.</text>
</comment>
<gene>
    <name type="ordered locus">VP2129</name>
</gene>
<name>Y2129_VIBPA</name>
<evidence type="ECO:0000255" key="1">
    <source>
        <dbReference type="HAMAP-Rule" id="MF_00816"/>
    </source>
</evidence>
<evidence type="ECO:0007829" key="2">
    <source>
        <dbReference type="PDB" id="2JPQ"/>
    </source>
</evidence>